<gene>
    <name evidence="7" type="primary">bck1</name>
    <name type="ORF">AFUA_3G11080</name>
</gene>
<keyword id="KW-0067">ATP-binding</keyword>
<keyword id="KW-0418">Kinase</keyword>
<keyword id="KW-0547">Nucleotide-binding</keyword>
<keyword id="KW-1185">Reference proteome</keyword>
<keyword id="KW-0808">Transferase</keyword>
<keyword id="KW-0843">Virulence</keyword>
<evidence type="ECO:0000255" key="1">
    <source>
        <dbReference type="PROSITE-ProRule" id="PRU00159"/>
    </source>
</evidence>
<evidence type="ECO:0000256" key="2">
    <source>
        <dbReference type="SAM" id="MobiDB-lite"/>
    </source>
</evidence>
<evidence type="ECO:0000269" key="3">
    <source>
    </source>
</evidence>
<evidence type="ECO:0000269" key="4">
    <source>
    </source>
</evidence>
<evidence type="ECO:0000269" key="5">
    <source>
    </source>
</evidence>
<evidence type="ECO:0000269" key="6">
    <source>
    </source>
</evidence>
<evidence type="ECO:0000303" key="7">
    <source>
    </source>
</evidence>
<evidence type="ECO:0000305" key="8"/>
<comment type="function">
    <text evidence="3 4 5 6">Mitogen-activated protein kinase kinase kinase; part of cell wall integrity (CWI) signaling pathway composed of pkcA, the bck1-mkk2-mpka MAPK cascade and the downstream rlmA transcription regulator (PubMed:19715768). The CWI signaling pathway regulates cell wall integrity and pyomelanin formation (PubMed:19715768). CWI also controls oxidative stress response, gliotoxin production, iron adaptation and asexual development (PubMed:21883519, PubMed:32005734). Finally, CWI is constitutively required for A.fumigatus to cope with the temperature increase found in the mammalian lung environment, during infection (PubMed:33010083).</text>
</comment>
<comment type="catalytic activity">
    <reaction evidence="3">
        <text>L-seryl-[protein] + ATP = O-phospho-L-seryl-[protein] + ADP + H(+)</text>
        <dbReference type="Rhea" id="RHEA:17989"/>
        <dbReference type="Rhea" id="RHEA-COMP:9863"/>
        <dbReference type="Rhea" id="RHEA-COMP:11604"/>
        <dbReference type="ChEBI" id="CHEBI:15378"/>
        <dbReference type="ChEBI" id="CHEBI:29999"/>
        <dbReference type="ChEBI" id="CHEBI:30616"/>
        <dbReference type="ChEBI" id="CHEBI:83421"/>
        <dbReference type="ChEBI" id="CHEBI:456216"/>
        <dbReference type="EC" id="2.7.11.24"/>
    </reaction>
    <physiologicalReaction direction="left-to-right" evidence="3">
        <dbReference type="Rhea" id="RHEA:17990"/>
    </physiologicalReaction>
</comment>
<comment type="catalytic activity">
    <reaction evidence="3">
        <text>L-threonyl-[protein] + ATP = O-phospho-L-threonyl-[protein] + ADP + H(+)</text>
        <dbReference type="Rhea" id="RHEA:46608"/>
        <dbReference type="Rhea" id="RHEA-COMP:11060"/>
        <dbReference type="Rhea" id="RHEA-COMP:11605"/>
        <dbReference type="ChEBI" id="CHEBI:15378"/>
        <dbReference type="ChEBI" id="CHEBI:30013"/>
        <dbReference type="ChEBI" id="CHEBI:30616"/>
        <dbReference type="ChEBI" id="CHEBI:61977"/>
        <dbReference type="ChEBI" id="CHEBI:456216"/>
        <dbReference type="EC" id="2.7.11.24"/>
    </reaction>
    <physiologicalReaction direction="left-to-right" evidence="3">
        <dbReference type="Rhea" id="RHEA:46609"/>
    </physiologicalReaction>
</comment>
<comment type="disruption phenotype">
    <text evidence="3">Results in severe sensitivity against cell wall-disturbing compounds congo red or calcofluor white, and drastic alterations of the fungal morphology (PubMed:19715768). Impairs phosphorylation of mpkA (PubMed:19715768).</text>
</comment>
<comment type="similarity">
    <text evidence="8">Belongs to the protein kinase superfamily. STE Ser/Thr protein kinase family. MAP kinase kinase kinase subfamily.</text>
</comment>
<sequence>MDGQRQQTYIPAPPPPSATQPSQSHMLSLPPPPPRHLPTQPQGVMPPPPPGPPPGPPPGPGYGASKLANSQLQQQNNLGWQHNWARQALSQGFLPPPPPPPMVPTNQAYGRQTSFSVPNADGPITSATYVPGSNTFGAGVGIPGFDAHTRPSYEAYGTMSGSDRIRGPVHHLYESSGGDGSAYKRDGTVPPTPSARTMPSSLALHDNAQESVASSLPGATAQNHQSQTGQTNEPTKSPSHRQNNSNTLLGGMSPSEAAVQWPLDRVLLWLAKNGFSRDWQETFKTLQIEGADFLDIGHGANGRGNFNKMHNEVFPQLAKECEASGTGWDKERELGEGKRMRRLIRQIHDDDSFDVGIPAQKRRESQAPSEGAPDTSPKLSHEPQSAGPHSGTIENSPNLRAPQLAQPHRHSVQMRSVTLPIPTTHDIASSDFSQTDGISSRSDFSRSVLVGLGVDHRRQSPSMSSDNGNLVAPFRSYEDSPKSGSPATQHATLNQGLSSSSTGDLSVKYEHSRGNSSDSTMGRRYYESRKGQETIRPSPQEMCSRQWTGETSSSYPKEHKGIFNFLKKRSKGGDSTHPSPEEPNLESPTSPVNLRQNGPHLPYTKPSFNASDMSLGERPSSASMSDHERLRGKPAQKGKKWSFVTLDGWNYRLVDITDMDSVETLRAAICHNLGIADWASAQIFLTEPGQSDHEEPLNDTMLALCRRTKSDSIGSLKLFVRGTHLQPVPNHVPNFAGLGVPLPDKHTASPTHHLPRKPLDDEALSRIPPQPQTGPASPQLGIRPQQPKTPAAKFPARDAPQHTEGMSPVEGDQQVGISPEPDKADLLARHEEHKREVERKQKAYLSSKGPPQPRNDSYGETGYRRAGVIDFDERRVSPYEDKKADTLVPLRKPPSAPQESYTLTRINSLRKKDGDRPRAQPAVQTHGLGAVLASMGRMTSAIGTPAPSVPTPTSAGGKQTNFGSFGSPTQGNTKSAPQSSPEKESLDNPGNPAEHRHTKSTAPEIPKPTLQSRKSYGPEFDFEETEVSFQRSPRPQDDSDEDSDDGLFAIPLSNNKASTKENDSGSGTSEAQKRTEKPALTVNTESRLRKGLSVSFRSPSATRESFADANGDSGGREGASFLMAASPEDERPTPRRDSFARGDIWASRPPVEGVIDNLDDFFPDIDLDAPYLDGQGVSPPSSPANRAPPENDLHKKENQPSSSYTGEMNANAGDTLGSNEPTLKPQGGDVVARRNINRSGGGLTRGKSIREVAKGANQASRSRSIHTGNQKSGEILRRKSTKMFGAKIMQIKPKPGSRLSQLDPIPQNNTPSGVPQRQPTFRIIRGQLIGKGTYGRVYLGINADNGEVLAVKQVEINPRLAGQDTDRVKEMVAAMDQEIDTMQHLEHPNIVQYLGCERGEFSISIYLEYISGGSIGSCLRKHGKFEESVVKSLTRQTLSGLAYLHDQGILHRDLKADNILLDLDGTCKISDFGISKKTDDIYGNDSSNSMQGSVFWMAPEVIQSQGQGYSAKVDIWSLGCVVLEMFAGRRPWSKEEAIGAIFKLGSLSQAPPIPDDVSMTISPAALAFMYDCFTVPYRDSSERPTAQTLLTRHPFCEEDPNYNFLDTELYAKIRHVL</sequence>
<proteinExistence type="inferred from homology"/>
<accession>Q4WXY0</accession>
<name>BCK1_ASPFU</name>
<reference key="1">
    <citation type="journal article" date="2005" name="Nature">
        <title>Genomic sequence of the pathogenic and allergenic filamentous fungus Aspergillus fumigatus.</title>
        <authorList>
            <person name="Nierman W.C."/>
            <person name="Pain A."/>
            <person name="Anderson M.J."/>
            <person name="Wortman J.R."/>
            <person name="Kim H.S."/>
            <person name="Arroyo J."/>
            <person name="Berriman M."/>
            <person name="Abe K."/>
            <person name="Archer D.B."/>
            <person name="Bermejo C."/>
            <person name="Bennett J.W."/>
            <person name="Bowyer P."/>
            <person name="Chen D."/>
            <person name="Collins M."/>
            <person name="Coulsen R."/>
            <person name="Davies R."/>
            <person name="Dyer P.S."/>
            <person name="Farman M.L."/>
            <person name="Fedorova N."/>
            <person name="Fedorova N.D."/>
            <person name="Feldblyum T.V."/>
            <person name="Fischer R."/>
            <person name="Fosker N."/>
            <person name="Fraser A."/>
            <person name="Garcia J.L."/>
            <person name="Garcia M.J."/>
            <person name="Goble A."/>
            <person name="Goldman G.H."/>
            <person name="Gomi K."/>
            <person name="Griffith-Jones S."/>
            <person name="Gwilliam R."/>
            <person name="Haas B.J."/>
            <person name="Haas H."/>
            <person name="Harris D.E."/>
            <person name="Horiuchi H."/>
            <person name="Huang J."/>
            <person name="Humphray S."/>
            <person name="Jimenez J."/>
            <person name="Keller N."/>
            <person name="Khouri H."/>
            <person name="Kitamoto K."/>
            <person name="Kobayashi T."/>
            <person name="Konzack S."/>
            <person name="Kulkarni R."/>
            <person name="Kumagai T."/>
            <person name="Lafton A."/>
            <person name="Latge J.-P."/>
            <person name="Li W."/>
            <person name="Lord A."/>
            <person name="Lu C."/>
            <person name="Majoros W.H."/>
            <person name="May G.S."/>
            <person name="Miller B.L."/>
            <person name="Mohamoud Y."/>
            <person name="Molina M."/>
            <person name="Monod M."/>
            <person name="Mouyna I."/>
            <person name="Mulligan S."/>
            <person name="Murphy L.D."/>
            <person name="O'Neil S."/>
            <person name="Paulsen I."/>
            <person name="Penalva M.A."/>
            <person name="Pertea M."/>
            <person name="Price C."/>
            <person name="Pritchard B.L."/>
            <person name="Quail M.A."/>
            <person name="Rabbinowitsch E."/>
            <person name="Rawlins N."/>
            <person name="Rajandream M.A."/>
            <person name="Reichard U."/>
            <person name="Renauld H."/>
            <person name="Robson G.D."/>
            <person name="Rodriguez de Cordoba S."/>
            <person name="Rodriguez-Pena J.M."/>
            <person name="Ronning C.M."/>
            <person name="Rutter S."/>
            <person name="Salzberg S.L."/>
            <person name="Sanchez M."/>
            <person name="Sanchez-Ferrero J.C."/>
            <person name="Saunders D."/>
            <person name="Seeger K."/>
            <person name="Squares R."/>
            <person name="Squares S."/>
            <person name="Takeuchi M."/>
            <person name="Tekaia F."/>
            <person name="Turner G."/>
            <person name="Vazquez de Aldana C.R."/>
            <person name="Weidman J."/>
            <person name="White O."/>
            <person name="Woodward J.R."/>
            <person name="Yu J.-H."/>
            <person name="Fraser C.M."/>
            <person name="Galagan J.E."/>
            <person name="Asai K."/>
            <person name="Machida M."/>
            <person name="Hall N."/>
            <person name="Barrell B.G."/>
            <person name="Denning D.W."/>
        </authorList>
    </citation>
    <scope>NUCLEOTIDE SEQUENCE [LARGE SCALE GENOMIC DNA]</scope>
    <source>
        <strain>ATCC MYA-4609 / CBS 101355 / FGSC A1100 / Af293</strain>
    </source>
</reference>
<reference key="2">
    <citation type="journal article" date="2009" name="Fungal Genet. Biol.">
        <title>The MpkA MAP kinase module regulates cell wall integrity signaling and pyomelanin formation in Aspergillus fumigatus.</title>
        <authorList>
            <person name="Valiante V."/>
            <person name="Jain R."/>
            <person name="Heinekamp T."/>
            <person name="Brakhage A.A."/>
        </authorList>
    </citation>
    <scope>FUNCTION</scope>
    <scope>DISRUPTION PHENOTYPE</scope>
</reference>
<reference key="3">
    <citation type="journal article" date="2011" name="Mol. Microbiol.">
        <title>The MAP kinase MpkA controls cell wall integrity, oxidative stress response, gliotoxin production and iron adaptation in Aspergillus fumigatus.</title>
        <authorList>
            <person name="Jain R."/>
            <person name="Valiante V."/>
            <person name="Remme N."/>
            <person name="Docimo T."/>
            <person name="Heinekamp T."/>
            <person name="Hertweck C."/>
            <person name="Gershenzon J."/>
            <person name="Haas H."/>
            <person name="Brakhage A.A."/>
        </authorList>
    </citation>
    <scope>FUNCTION</scope>
</reference>
<reference key="4">
    <citation type="journal article" date="2020" name="Appl. Environ. Microbiol.">
        <title>The cell wall integrity pathway contributes to the early stages of Aspergillus fumigatus asexual development.</title>
        <authorList>
            <person name="Rocha M.C."/>
            <person name="Fabri J.H.T.M."/>
            <person name="Simoes I.T."/>
            <person name="Silva-Rocha R."/>
            <person name="Hagiwara D."/>
            <person name="da Cunha A.F."/>
            <person name="Goldman G.H."/>
            <person name="Canovas D."/>
            <person name="Malavazi I."/>
        </authorList>
    </citation>
    <scope>FUNCTION</scope>
</reference>
<reference key="5">
    <citation type="journal article" date="2021" name="Cell. Microbiol.">
        <title>Aspergillus fumigatus Hsp90 interacts with the main components of the cell wall integrity pathway and cooperates in heat shock and cell wall stress adaptation.</title>
        <authorList>
            <person name="Rocha M.C."/>
            <person name="Minari K."/>
            <person name="Fabri J.H.T.M."/>
            <person name="Kerkaert J.D."/>
            <person name="Gava L.M."/>
            <person name="da Cunha A.F."/>
            <person name="Cramer R.A."/>
            <person name="Borges J.C."/>
            <person name="Malavazi I."/>
        </authorList>
    </citation>
    <scope>FUNCTION</scope>
</reference>
<feature type="chain" id="PRO_0000453184" description="Mitogen-activated protein kinase kinae kinase bck1">
    <location>
        <begin position="1"/>
        <end position="1617"/>
    </location>
</feature>
<feature type="domain" description="Protein kinase" evidence="1">
    <location>
        <begin position="1323"/>
        <end position="1596"/>
    </location>
</feature>
<feature type="region of interest" description="Disordered" evidence="2">
    <location>
        <begin position="1"/>
        <end position="73"/>
    </location>
</feature>
<feature type="region of interest" description="Disordered" evidence="2">
    <location>
        <begin position="167"/>
        <end position="199"/>
    </location>
</feature>
<feature type="region of interest" description="Disordered" evidence="2">
    <location>
        <begin position="211"/>
        <end position="253"/>
    </location>
</feature>
<feature type="region of interest" description="Disordered" evidence="2">
    <location>
        <begin position="345"/>
        <end position="399"/>
    </location>
</feature>
<feature type="region of interest" description="Disordered" evidence="2">
    <location>
        <begin position="455"/>
        <end position="555"/>
    </location>
</feature>
<feature type="region of interest" description="Disordered" evidence="2">
    <location>
        <begin position="568"/>
        <end position="633"/>
    </location>
</feature>
<feature type="region of interest" description="Disordered" evidence="2">
    <location>
        <begin position="739"/>
        <end position="820"/>
    </location>
</feature>
<feature type="region of interest" description="Disordered" evidence="2">
    <location>
        <begin position="832"/>
        <end position="1144"/>
    </location>
</feature>
<feature type="region of interest" description="Disordered" evidence="2">
    <location>
        <begin position="1165"/>
        <end position="1277"/>
    </location>
</feature>
<feature type="compositionally biased region" description="Low complexity" evidence="2">
    <location>
        <begin position="19"/>
        <end position="28"/>
    </location>
</feature>
<feature type="compositionally biased region" description="Pro residues" evidence="2">
    <location>
        <begin position="44"/>
        <end position="60"/>
    </location>
</feature>
<feature type="compositionally biased region" description="Polar residues" evidence="2">
    <location>
        <begin position="220"/>
        <end position="248"/>
    </location>
</feature>
<feature type="compositionally biased region" description="Polar residues" evidence="2">
    <location>
        <begin position="482"/>
        <end position="504"/>
    </location>
</feature>
<feature type="compositionally biased region" description="Basic and acidic residues" evidence="2">
    <location>
        <begin position="524"/>
        <end position="533"/>
    </location>
</feature>
<feature type="compositionally biased region" description="Polar residues" evidence="2">
    <location>
        <begin position="535"/>
        <end position="555"/>
    </location>
</feature>
<feature type="compositionally biased region" description="Polar residues" evidence="2">
    <location>
        <begin position="586"/>
        <end position="596"/>
    </location>
</feature>
<feature type="compositionally biased region" description="Basic and acidic residues" evidence="2">
    <location>
        <begin position="832"/>
        <end position="841"/>
    </location>
</feature>
<feature type="compositionally biased region" description="Basic and acidic residues" evidence="2">
    <location>
        <begin position="871"/>
        <end position="885"/>
    </location>
</feature>
<feature type="compositionally biased region" description="Polar residues" evidence="2">
    <location>
        <begin position="897"/>
        <end position="907"/>
    </location>
</feature>
<feature type="compositionally biased region" description="Polar residues" evidence="2">
    <location>
        <begin position="956"/>
        <end position="980"/>
    </location>
</feature>
<feature type="compositionally biased region" description="Basic and acidic residues" evidence="2">
    <location>
        <begin position="1128"/>
        <end position="1140"/>
    </location>
</feature>
<feature type="compositionally biased region" description="Basic and acidic residues" evidence="2">
    <location>
        <begin position="1189"/>
        <end position="1198"/>
    </location>
</feature>
<feature type="compositionally biased region" description="Polar residues" evidence="2">
    <location>
        <begin position="1199"/>
        <end position="1208"/>
    </location>
</feature>
<feature type="compositionally biased region" description="Polar residues" evidence="2">
    <location>
        <begin position="1257"/>
        <end position="1272"/>
    </location>
</feature>
<feature type="binding site" evidence="1">
    <location>
        <begin position="1329"/>
        <end position="1337"/>
    </location>
    <ligand>
        <name>ATP</name>
        <dbReference type="ChEBI" id="CHEBI:30616"/>
    </ligand>
</feature>
<feature type="binding site" evidence="1">
    <location>
        <position position="1352"/>
    </location>
    <ligand>
        <name>ATP</name>
        <dbReference type="ChEBI" id="CHEBI:30616"/>
    </ligand>
</feature>
<protein>
    <recommendedName>
        <fullName evidence="7">Mitogen-activated protein kinase kinae kinase bck1</fullName>
        <shortName evidence="7">MAPKKK bck1</shortName>
        <ecNumber evidence="3">2.7.11.24</ecNumber>
    </recommendedName>
    <alternativeName>
        <fullName evidence="8">MEKK bck1</fullName>
    </alternativeName>
</protein>
<dbReference type="EC" id="2.7.11.24" evidence="3"/>
<dbReference type="EMBL" id="AAHF01000002">
    <property type="protein sequence ID" value="EAL92473.1"/>
    <property type="molecule type" value="Genomic_DNA"/>
</dbReference>
<dbReference type="RefSeq" id="XP_754511.1">
    <property type="nucleotide sequence ID" value="XM_749418.1"/>
</dbReference>
<dbReference type="SMR" id="Q4WXY0"/>
<dbReference type="STRING" id="330879.Q4WXY0"/>
<dbReference type="EnsemblFungi" id="EAL92473">
    <property type="protein sequence ID" value="EAL92473"/>
    <property type="gene ID" value="AFUA_3G11080"/>
</dbReference>
<dbReference type="GeneID" id="3512087"/>
<dbReference type="KEGG" id="afm:AFUA_3G11080"/>
<dbReference type="eggNOG" id="KOG0198">
    <property type="taxonomic scope" value="Eukaryota"/>
</dbReference>
<dbReference type="HOGENOM" id="CLU_000961_3_0_1"/>
<dbReference type="InParanoid" id="Q4WXY0"/>
<dbReference type="OMA" id="MQISPKP"/>
<dbReference type="OrthoDB" id="266718at2759"/>
<dbReference type="Proteomes" id="UP000002530">
    <property type="component" value="Chromosome 3"/>
</dbReference>
<dbReference type="GO" id="GO:0005524">
    <property type="term" value="F:ATP binding"/>
    <property type="evidence" value="ECO:0007669"/>
    <property type="project" value="UniProtKB-KW"/>
</dbReference>
<dbReference type="GO" id="GO:0004672">
    <property type="term" value="F:protein kinase activity"/>
    <property type="evidence" value="ECO:0007669"/>
    <property type="project" value="InterPro"/>
</dbReference>
<dbReference type="GO" id="GO:0000165">
    <property type="term" value="P:MAPK cascade"/>
    <property type="evidence" value="ECO:0000318"/>
    <property type="project" value="GO_Central"/>
</dbReference>
<dbReference type="FunFam" id="1.10.510.10:FF:000182">
    <property type="entry name" value="MAP kinase kinase kinase mkh1"/>
    <property type="match status" value="1"/>
</dbReference>
<dbReference type="Gene3D" id="1.10.510.10">
    <property type="entry name" value="Transferase(Phosphotransferase) domain 1"/>
    <property type="match status" value="1"/>
</dbReference>
<dbReference type="InterPro" id="IPR011009">
    <property type="entry name" value="Kinase-like_dom_sf"/>
</dbReference>
<dbReference type="InterPro" id="IPR050538">
    <property type="entry name" value="MAP_kinase_kinase_kinase"/>
</dbReference>
<dbReference type="InterPro" id="IPR000719">
    <property type="entry name" value="Prot_kinase_dom"/>
</dbReference>
<dbReference type="InterPro" id="IPR017441">
    <property type="entry name" value="Protein_kinase_ATP_BS"/>
</dbReference>
<dbReference type="InterPro" id="IPR008271">
    <property type="entry name" value="Ser/Thr_kinase_AS"/>
</dbReference>
<dbReference type="PANTHER" id="PTHR48016">
    <property type="entry name" value="MAP KINASE KINASE KINASE SSK2-RELATED-RELATED"/>
    <property type="match status" value="1"/>
</dbReference>
<dbReference type="PANTHER" id="PTHR48016:SF48">
    <property type="entry name" value="SERINE_THREONINE-PROTEIN KINASE BCK1_SLK1_SSP31"/>
    <property type="match status" value="1"/>
</dbReference>
<dbReference type="Pfam" id="PF00069">
    <property type="entry name" value="Pkinase"/>
    <property type="match status" value="1"/>
</dbReference>
<dbReference type="SMART" id="SM00220">
    <property type="entry name" value="S_TKc"/>
    <property type="match status" value="1"/>
</dbReference>
<dbReference type="SUPFAM" id="SSF56112">
    <property type="entry name" value="Protein kinase-like (PK-like)"/>
    <property type="match status" value="1"/>
</dbReference>
<dbReference type="PROSITE" id="PS00107">
    <property type="entry name" value="PROTEIN_KINASE_ATP"/>
    <property type="match status" value="1"/>
</dbReference>
<dbReference type="PROSITE" id="PS50011">
    <property type="entry name" value="PROTEIN_KINASE_DOM"/>
    <property type="match status" value="1"/>
</dbReference>
<dbReference type="PROSITE" id="PS00108">
    <property type="entry name" value="PROTEIN_KINASE_ST"/>
    <property type="match status" value="1"/>
</dbReference>
<organism>
    <name type="scientific">Aspergillus fumigatus (strain ATCC MYA-4609 / CBS 101355 / FGSC A1100 / Af293)</name>
    <name type="common">Neosartorya fumigata</name>
    <dbReference type="NCBI Taxonomy" id="330879"/>
    <lineage>
        <taxon>Eukaryota</taxon>
        <taxon>Fungi</taxon>
        <taxon>Dikarya</taxon>
        <taxon>Ascomycota</taxon>
        <taxon>Pezizomycotina</taxon>
        <taxon>Eurotiomycetes</taxon>
        <taxon>Eurotiomycetidae</taxon>
        <taxon>Eurotiales</taxon>
        <taxon>Aspergillaceae</taxon>
        <taxon>Aspergillus</taxon>
        <taxon>Aspergillus subgen. Fumigati</taxon>
    </lineage>
</organism>